<accession>A9AAS2</accession>
<evidence type="ECO:0000255" key="1">
    <source>
        <dbReference type="HAMAP-Rule" id="MF_00123"/>
    </source>
</evidence>
<reference key="1">
    <citation type="submission" date="2007-10" db="EMBL/GenBank/DDBJ databases">
        <title>Complete sequence of Methanococcus maripaludis C6.</title>
        <authorList>
            <consortium name="US DOE Joint Genome Institute"/>
            <person name="Copeland A."/>
            <person name="Lucas S."/>
            <person name="Lapidus A."/>
            <person name="Barry K."/>
            <person name="Glavina del Rio T."/>
            <person name="Dalin E."/>
            <person name="Tice H."/>
            <person name="Pitluck S."/>
            <person name="Clum A."/>
            <person name="Schmutz J."/>
            <person name="Larimer F."/>
            <person name="Land M."/>
            <person name="Hauser L."/>
            <person name="Kyrpides N."/>
            <person name="Mikhailova N."/>
            <person name="Sieprawska-Lupa M."/>
            <person name="Whitman W.B."/>
            <person name="Richardson P."/>
        </authorList>
    </citation>
    <scope>NUCLEOTIDE SEQUENCE [LARGE SCALE GENOMIC DNA]</scope>
    <source>
        <strain>C6 / ATCC BAA-1332</strain>
    </source>
</reference>
<protein>
    <recommendedName>
        <fullName evidence="1">Arginine--tRNA ligase</fullName>
        <ecNumber evidence="1">6.1.1.19</ecNumber>
    </recommendedName>
    <alternativeName>
        <fullName evidence="1">Arginyl-tRNA synthetase</fullName>
        <shortName evidence="1">ArgRS</shortName>
    </alternativeName>
</protein>
<name>SYR_METM6</name>
<keyword id="KW-0030">Aminoacyl-tRNA synthetase</keyword>
<keyword id="KW-0067">ATP-binding</keyword>
<keyword id="KW-0963">Cytoplasm</keyword>
<keyword id="KW-0436">Ligase</keyword>
<keyword id="KW-0547">Nucleotide-binding</keyword>
<keyword id="KW-0648">Protein biosynthesis</keyword>
<comment type="catalytic activity">
    <reaction evidence="1">
        <text>tRNA(Arg) + L-arginine + ATP = L-arginyl-tRNA(Arg) + AMP + diphosphate</text>
        <dbReference type="Rhea" id="RHEA:20301"/>
        <dbReference type="Rhea" id="RHEA-COMP:9658"/>
        <dbReference type="Rhea" id="RHEA-COMP:9673"/>
        <dbReference type="ChEBI" id="CHEBI:30616"/>
        <dbReference type="ChEBI" id="CHEBI:32682"/>
        <dbReference type="ChEBI" id="CHEBI:33019"/>
        <dbReference type="ChEBI" id="CHEBI:78442"/>
        <dbReference type="ChEBI" id="CHEBI:78513"/>
        <dbReference type="ChEBI" id="CHEBI:456215"/>
        <dbReference type="EC" id="6.1.1.19"/>
    </reaction>
</comment>
<comment type="subcellular location">
    <subcellularLocation>
        <location evidence="1">Cytoplasm</location>
    </subcellularLocation>
</comment>
<comment type="similarity">
    <text evidence="1">Belongs to the class-I aminoacyl-tRNA synthetase family.</text>
</comment>
<feature type="chain" id="PRO_1000095380" description="Arginine--tRNA ligase">
    <location>
        <begin position="1"/>
        <end position="566"/>
    </location>
</feature>
<feature type="short sequence motif" description="'HIGH' region">
    <location>
        <begin position="121"/>
        <end position="131"/>
    </location>
</feature>
<sequence>MDVENLIITTLKDKVKELTGTEMDIRLEEPPAINMGDYSTNISFRLAKDLKKAPKMIAEDIANSLSISGIERIEAVNGYINFFMNYPDFSKETVSKITSEKENFGKLEKRGEKVILEHTSANPNGPFHIGHGRNMVIGDSLKRILIASGYDVETQYYVNDMGRQEAIVVFGNERFELDKSKKADHAIGEVYVETNKLLAENEELEQEILNLMKNYESACEAGIENELTEKFKNAVDYSLGGFKETLSTLNIYHDKFVWESEFVKSGMVRDVIKRLMDTGKVVEDEVFRLDLSDYGLEKKLVLARLNGTSLYSTRDIAYHINKMENCDFAVNLLGADHKLTAVLVNKTLALLGYNEAEVVFYEFISLPEGSMSTRRGRFISMDELFEEAKSRAAEEVRKRGVAQSEEEIEEIAKKIAVGAVRYNIVRIAPEKPMVFRWDEALDFEKVGCPVIQYAHARCSRILENVENISNDNLFAYEMNENEKTIVKLLSKLPKIVEKAAEVRKPQIVANYVLDVAQGFNKFYANCPVLKEENETIKNSRLAIVSTTKTVLENTLDLLGIEMPGKM</sequence>
<proteinExistence type="inferred from homology"/>
<organism>
    <name type="scientific">Methanococcus maripaludis (strain C6 / ATCC BAA-1332)</name>
    <dbReference type="NCBI Taxonomy" id="444158"/>
    <lineage>
        <taxon>Archaea</taxon>
        <taxon>Methanobacteriati</taxon>
        <taxon>Methanobacteriota</taxon>
        <taxon>Methanomada group</taxon>
        <taxon>Methanococci</taxon>
        <taxon>Methanococcales</taxon>
        <taxon>Methanococcaceae</taxon>
        <taxon>Methanococcus</taxon>
    </lineage>
</organism>
<dbReference type="EC" id="6.1.1.19" evidence="1"/>
<dbReference type="EMBL" id="CP000867">
    <property type="protein sequence ID" value="ABX02445.1"/>
    <property type="molecule type" value="Genomic_DNA"/>
</dbReference>
<dbReference type="SMR" id="A9AAS2"/>
<dbReference type="STRING" id="444158.MmarC6_1633"/>
<dbReference type="KEGG" id="mmx:MmarC6_1633"/>
<dbReference type="eggNOG" id="arCOG00487">
    <property type="taxonomic scope" value="Archaea"/>
</dbReference>
<dbReference type="HOGENOM" id="CLU_006406_6_1_2"/>
<dbReference type="OrthoDB" id="372102at2157"/>
<dbReference type="PhylomeDB" id="A9AAS2"/>
<dbReference type="GO" id="GO:0005737">
    <property type="term" value="C:cytoplasm"/>
    <property type="evidence" value="ECO:0007669"/>
    <property type="project" value="UniProtKB-SubCell"/>
</dbReference>
<dbReference type="GO" id="GO:0004814">
    <property type="term" value="F:arginine-tRNA ligase activity"/>
    <property type="evidence" value="ECO:0007669"/>
    <property type="project" value="UniProtKB-UniRule"/>
</dbReference>
<dbReference type="GO" id="GO:0005524">
    <property type="term" value="F:ATP binding"/>
    <property type="evidence" value="ECO:0007669"/>
    <property type="project" value="UniProtKB-UniRule"/>
</dbReference>
<dbReference type="GO" id="GO:0006420">
    <property type="term" value="P:arginyl-tRNA aminoacylation"/>
    <property type="evidence" value="ECO:0007669"/>
    <property type="project" value="UniProtKB-UniRule"/>
</dbReference>
<dbReference type="CDD" id="cd00671">
    <property type="entry name" value="ArgRS_core"/>
    <property type="match status" value="1"/>
</dbReference>
<dbReference type="Gene3D" id="3.30.1360.70">
    <property type="entry name" value="Arginyl tRNA synthetase N-terminal domain"/>
    <property type="match status" value="1"/>
</dbReference>
<dbReference type="Gene3D" id="3.40.50.620">
    <property type="entry name" value="HUPs"/>
    <property type="match status" value="1"/>
</dbReference>
<dbReference type="Gene3D" id="1.10.730.10">
    <property type="entry name" value="Isoleucyl-tRNA Synthetase, Domain 1"/>
    <property type="match status" value="1"/>
</dbReference>
<dbReference type="HAMAP" id="MF_00123">
    <property type="entry name" value="Arg_tRNA_synth"/>
    <property type="match status" value="1"/>
</dbReference>
<dbReference type="InterPro" id="IPR001412">
    <property type="entry name" value="aa-tRNA-synth_I_CS"/>
</dbReference>
<dbReference type="InterPro" id="IPR001278">
    <property type="entry name" value="Arg-tRNA-ligase"/>
</dbReference>
<dbReference type="InterPro" id="IPR005148">
    <property type="entry name" value="Arg-tRNA-synth_N"/>
</dbReference>
<dbReference type="InterPro" id="IPR036695">
    <property type="entry name" value="Arg-tRNA-synth_N_sf"/>
</dbReference>
<dbReference type="InterPro" id="IPR035684">
    <property type="entry name" value="ArgRS_core"/>
</dbReference>
<dbReference type="InterPro" id="IPR008909">
    <property type="entry name" value="DALR_anticod-bd"/>
</dbReference>
<dbReference type="InterPro" id="IPR014729">
    <property type="entry name" value="Rossmann-like_a/b/a_fold"/>
</dbReference>
<dbReference type="InterPro" id="IPR009080">
    <property type="entry name" value="tRNAsynth_Ia_anticodon-bd"/>
</dbReference>
<dbReference type="NCBIfam" id="TIGR00456">
    <property type="entry name" value="argS"/>
    <property type="match status" value="1"/>
</dbReference>
<dbReference type="PANTHER" id="PTHR11956:SF5">
    <property type="entry name" value="ARGININE--TRNA LIGASE, CYTOPLASMIC"/>
    <property type="match status" value="1"/>
</dbReference>
<dbReference type="PANTHER" id="PTHR11956">
    <property type="entry name" value="ARGINYL-TRNA SYNTHETASE"/>
    <property type="match status" value="1"/>
</dbReference>
<dbReference type="Pfam" id="PF03485">
    <property type="entry name" value="Arg_tRNA_synt_N"/>
    <property type="match status" value="1"/>
</dbReference>
<dbReference type="Pfam" id="PF05746">
    <property type="entry name" value="DALR_1"/>
    <property type="match status" value="1"/>
</dbReference>
<dbReference type="Pfam" id="PF00750">
    <property type="entry name" value="tRNA-synt_1d"/>
    <property type="match status" value="1"/>
</dbReference>
<dbReference type="PRINTS" id="PR01038">
    <property type="entry name" value="TRNASYNTHARG"/>
</dbReference>
<dbReference type="SMART" id="SM01016">
    <property type="entry name" value="Arg_tRNA_synt_N"/>
    <property type="match status" value="1"/>
</dbReference>
<dbReference type="SMART" id="SM00836">
    <property type="entry name" value="DALR_1"/>
    <property type="match status" value="1"/>
</dbReference>
<dbReference type="SUPFAM" id="SSF47323">
    <property type="entry name" value="Anticodon-binding domain of a subclass of class I aminoacyl-tRNA synthetases"/>
    <property type="match status" value="1"/>
</dbReference>
<dbReference type="SUPFAM" id="SSF55190">
    <property type="entry name" value="Arginyl-tRNA synthetase (ArgRS), N-terminal 'additional' domain"/>
    <property type="match status" value="1"/>
</dbReference>
<dbReference type="SUPFAM" id="SSF52374">
    <property type="entry name" value="Nucleotidylyl transferase"/>
    <property type="match status" value="1"/>
</dbReference>
<dbReference type="PROSITE" id="PS00178">
    <property type="entry name" value="AA_TRNA_LIGASE_I"/>
    <property type="match status" value="1"/>
</dbReference>
<gene>
    <name evidence="1" type="primary">argS</name>
    <name type="ordered locus">MmarC6_1633</name>
</gene>